<name>CRYM_HUMAN</name>
<protein>
    <recommendedName>
        <fullName evidence="14">Ketimine reductase mu-crystallin</fullName>
        <ecNumber evidence="7 8">1.5.1.25</ecNumber>
    </recommendedName>
    <alternativeName>
        <fullName evidence="11">1-piperideine-2-carboxylate/1-pyrroline-2-carboxylate reductase</fullName>
        <shortName evidence="11">P2C/Pyr2C reductase</shortName>
        <ecNumber evidence="8">1.5.1.1</ecNumber>
    </alternativeName>
    <alternativeName>
        <fullName evidence="12">NADP-regulated thyroid-hormone-binding protein</fullName>
    </alternativeName>
</protein>
<accession>Q14894</accession>
<accession>D5MNX0</accession>
<accession>Q5HYB7</accession>
<dbReference type="EC" id="1.5.1.25" evidence="7 8"/>
<dbReference type="EC" id="1.5.1.1" evidence="8"/>
<dbReference type="EMBL" id="L02950">
    <property type="protein sequence ID" value="AAC16914.1"/>
    <property type="molecule type" value="mRNA"/>
</dbReference>
<dbReference type="EMBL" id="U85772">
    <property type="protein sequence ID" value="AAB81564.1"/>
    <property type="molecule type" value="mRNA"/>
</dbReference>
<dbReference type="EMBL" id="AF039397">
    <property type="protein sequence ID" value="AAB94938.1"/>
    <property type="molecule type" value="Genomic_DNA"/>
</dbReference>
<dbReference type="EMBL" id="AF039392">
    <property type="protein sequence ID" value="AAB94938.1"/>
    <property type="status" value="JOINED"/>
    <property type="molecule type" value="Genomic_DNA"/>
</dbReference>
<dbReference type="EMBL" id="AF039393">
    <property type="protein sequence ID" value="AAB94938.1"/>
    <property type="status" value="JOINED"/>
    <property type="molecule type" value="Genomic_DNA"/>
</dbReference>
<dbReference type="EMBL" id="AF039394">
    <property type="protein sequence ID" value="AAB94938.1"/>
    <property type="status" value="JOINED"/>
    <property type="molecule type" value="Genomic_DNA"/>
</dbReference>
<dbReference type="EMBL" id="AF039395">
    <property type="protein sequence ID" value="AAB94938.1"/>
    <property type="status" value="JOINED"/>
    <property type="molecule type" value="Genomic_DNA"/>
</dbReference>
<dbReference type="EMBL" id="AF039396">
    <property type="protein sequence ID" value="AAB94938.1"/>
    <property type="status" value="JOINED"/>
    <property type="molecule type" value="Genomic_DNA"/>
</dbReference>
<dbReference type="EMBL" id="AK290852">
    <property type="protein sequence ID" value="BAF83541.1"/>
    <property type="molecule type" value="mRNA"/>
</dbReference>
<dbReference type="EMBL" id="BX648477">
    <property type="protein sequence ID" value="CAI46030.1"/>
    <property type="molecule type" value="mRNA"/>
</dbReference>
<dbReference type="EMBL" id="AF001550">
    <property type="protein sequence ID" value="AAB67600.1"/>
    <property type="molecule type" value="Genomic_DNA"/>
</dbReference>
<dbReference type="EMBL" id="CH471228">
    <property type="protein sequence ID" value="EAW66863.1"/>
    <property type="molecule type" value="Genomic_DNA"/>
</dbReference>
<dbReference type="EMBL" id="BC018061">
    <property type="protein sequence ID" value="AAH18061.1"/>
    <property type="molecule type" value="mRNA"/>
</dbReference>
<dbReference type="CCDS" id="CCDS10597.1"/>
<dbReference type="PIR" id="B46290">
    <property type="entry name" value="B46290"/>
</dbReference>
<dbReference type="RefSeq" id="NP_001363185.1">
    <property type="nucleotide sequence ID" value="NM_001376256.1"/>
</dbReference>
<dbReference type="RefSeq" id="NP_001879.1">
    <property type="nucleotide sequence ID" value="NM_001888.5"/>
</dbReference>
<dbReference type="PDB" id="2I99">
    <property type="method" value="X-ray"/>
    <property type="resolution" value="2.60 A"/>
    <property type="chains" value="A/B=2-313"/>
</dbReference>
<dbReference type="PDBsum" id="2I99"/>
<dbReference type="SMR" id="Q14894"/>
<dbReference type="BioGRID" id="107815">
    <property type="interactions" value="9"/>
</dbReference>
<dbReference type="FunCoup" id="Q14894">
    <property type="interactions" value="355"/>
</dbReference>
<dbReference type="IntAct" id="Q14894">
    <property type="interactions" value="10"/>
</dbReference>
<dbReference type="MINT" id="Q14894"/>
<dbReference type="STRING" id="9606.ENSP00000219599"/>
<dbReference type="DrugBank" id="DB05235">
    <property type="generic name" value="NRP409"/>
</dbReference>
<dbReference type="GlyCosmos" id="Q14894">
    <property type="glycosylation" value="1 site, 1 glycan"/>
</dbReference>
<dbReference type="GlyGen" id="Q14894">
    <property type="glycosylation" value="1 site, 1 O-linked glycan (1 site)"/>
</dbReference>
<dbReference type="iPTMnet" id="Q14894"/>
<dbReference type="PhosphoSitePlus" id="Q14894"/>
<dbReference type="SwissPalm" id="Q14894"/>
<dbReference type="BioMuta" id="CRYM"/>
<dbReference type="DMDM" id="2498259"/>
<dbReference type="jPOST" id="Q14894"/>
<dbReference type="MassIVE" id="Q14894"/>
<dbReference type="PaxDb" id="9606-ENSP00000219599"/>
<dbReference type="PeptideAtlas" id="Q14894"/>
<dbReference type="ProteomicsDB" id="60215"/>
<dbReference type="Pumba" id="Q14894"/>
<dbReference type="Antibodypedia" id="12355">
    <property type="antibodies" value="324 antibodies from 28 providers"/>
</dbReference>
<dbReference type="DNASU" id="1428"/>
<dbReference type="Ensembl" id="ENST00000219599.8">
    <property type="protein sequence ID" value="ENSP00000219599.3"/>
    <property type="gene ID" value="ENSG00000103316.12"/>
</dbReference>
<dbReference type="Ensembl" id="ENST00000543948.5">
    <property type="protein sequence ID" value="ENSP00000440227.1"/>
    <property type="gene ID" value="ENSG00000103316.12"/>
</dbReference>
<dbReference type="Ensembl" id="ENST00000572914.2">
    <property type="protein sequence ID" value="ENSP00000461904.2"/>
    <property type="gene ID" value="ENSG00000103316.12"/>
</dbReference>
<dbReference type="GeneID" id="1428"/>
<dbReference type="KEGG" id="hsa:1428"/>
<dbReference type="MANE-Select" id="ENST00000572914.2">
    <property type="protein sequence ID" value="ENSP00000461904.2"/>
    <property type="RefSeq nucleotide sequence ID" value="NM_001376256.1"/>
    <property type="RefSeq protein sequence ID" value="NP_001363185.1"/>
</dbReference>
<dbReference type="UCSC" id="uc002dim.4">
    <property type="organism name" value="human"/>
</dbReference>
<dbReference type="AGR" id="HGNC:2418"/>
<dbReference type="CTD" id="1428"/>
<dbReference type="DisGeNET" id="1428"/>
<dbReference type="GeneCards" id="CRYM"/>
<dbReference type="HGNC" id="HGNC:2418">
    <property type="gene designation" value="CRYM"/>
</dbReference>
<dbReference type="HPA" id="ENSG00000103316">
    <property type="expression patterns" value="Tissue enhanced (brain, heart muscle)"/>
</dbReference>
<dbReference type="MalaCards" id="CRYM"/>
<dbReference type="MIM" id="123740">
    <property type="type" value="gene"/>
</dbReference>
<dbReference type="MIM" id="616357">
    <property type="type" value="phenotype"/>
</dbReference>
<dbReference type="neXtProt" id="NX_Q14894"/>
<dbReference type="OpenTargets" id="ENSG00000103316"/>
<dbReference type="Orphanet" id="90635">
    <property type="disease" value="Rare autosomal dominant non-syndromic sensorineural deafness type DFNA"/>
</dbReference>
<dbReference type="PharmGKB" id="PA26924"/>
<dbReference type="VEuPathDB" id="HostDB:ENSG00000103316"/>
<dbReference type="eggNOG" id="KOG3007">
    <property type="taxonomic scope" value="Eukaryota"/>
</dbReference>
<dbReference type="GeneTree" id="ENSGT00390000000237"/>
<dbReference type="InParanoid" id="Q14894"/>
<dbReference type="OMA" id="VKIVNVH"/>
<dbReference type="OrthoDB" id="41492at2759"/>
<dbReference type="PAN-GO" id="Q14894">
    <property type="GO annotations" value="3 GO annotations based on evolutionary models"/>
</dbReference>
<dbReference type="PhylomeDB" id="Q14894"/>
<dbReference type="TreeFam" id="TF105309"/>
<dbReference type="BioCyc" id="MetaCyc:ENSG00000103316-MONOMER"/>
<dbReference type="BRENDA" id="1.5.1.21">
    <property type="organism ID" value="2681"/>
</dbReference>
<dbReference type="BRENDA" id="1.5.1.25">
    <property type="organism ID" value="2681"/>
</dbReference>
<dbReference type="PathwayCommons" id="Q14894"/>
<dbReference type="Reactome" id="R-HSA-71064">
    <property type="pathway name" value="Lysine catabolism"/>
</dbReference>
<dbReference type="SignaLink" id="Q14894"/>
<dbReference type="BioGRID-ORCS" id="1428">
    <property type="hits" value="13 hits in 1150 CRISPR screens"/>
</dbReference>
<dbReference type="CD-CODE" id="FB4E32DD">
    <property type="entry name" value="Presynaptic clusters and postsynaptic densities"/>
</dbReference>
<dbReference type="ChiTaRS" id="CRYM">
    <property type="organism name" value="human"/>
</dbReference>
<dbReference type="EvolutionaryTrace" id="Q14894"/>
<dbReference type="GeneWiki" id="CRYM"/>
<dbReference type="GenomeRNAi" id="1428"/>
<dbReference type="Pharos" id="Q14894">
    <property type="development level" value="Tbio"/>
</dbReference>
<dbReference type="PRO" id="PR:Q14894"/>
<dbReference type="Proteomes" id="UP000005640">
    <property type="component" value="Chromosome 16"/>
</dbReference>
<dbReference type="RNAct" id="Q14894">
    <property type="molecule type" value="protein"/>
</dbReference>
<dbReference type="Bgee" id="ENSG00000103316">
    <property type="expression patterns" value="Expressed in cortical plate and 172 other cell types or tissues"/>
</dbReference>
<dbReference type="ExpressionAtlas" id="Q14894">
    <property type="expression patterns" value="baseline and differential"/>
</dbReference>
<dbReference type="GO" id="GO:0005737">
    <property type="term" value="C:cytoplasm"/>
    <property type="evidence" value="ECO:0000314"/>
    <property type="project" value="UniProtKB"/>
</dbReference>
<dbReference type="GO" id="GO:0005829">
    <property type="term" value="C:cytosol"/>
    <property type="evidence" value="ECO:0000314"/>
    <property type="project" value="HPA"/>
</dbReference>
<dbReference type="GO" id="GO:0070062">
    <property type="term" value="C:extracellular exosome"/>
    <property type="evidence" value="ECO:0007005"/>
    <property type="project" value="UniProtKB"/>
</dbReference>
<dbReference type="GO" id="GO:0005739">
    <property type="term" value="C:mitochondrion"/>
    <property type="evidence" value="ECO:0007669"/>
    <property type="project" value="Ensembl"/>
</dbReference>
<dbReference type="GO" id="GO:0005634">
    <property type="term" value="C:nucleus"/>
    <property type="evidence" value="ECO:0007669"/>
    <property type="project" value="Ensembl"/>
</dbReference>
<dbReference type="GO" id="GO:0005782">
    <property type="term" value="C:peroxisomal matrix"/>
    <property type="evidence" value="ECO:0000304"/>
    <property type="project" value="Reactome"/>
</dbReference>
<dbReference type="GO" id="GO:0050661">
    <property type="term" value="F:NADP binding"/>
    <property type="evidence" value="ECO:0000314"/>
    <property type="project" value="UniProtKB"/>
</dbReference>
<dbReference type="GO" id="GO:0042803">
    <property type="term" value="F:protein homodimerization activity"/>
    <property type="evidence" value="ECO:0000314"/>
    <property type="project" value="UniProtKB"/>
</dbReference>
<dbReference type="GO" id="GO:0047127">
    <property type="term" value="F:thiomorpholine-carboxylate dehydrogenase activity"/>
    <property type="evidence" value="ECO:0000314"/>
    <property type="project" value="FlyBase"/>
</dbReference>
<dbReference type="GO" id="GO:0070324">
    <property type="term" value="F:thyroid hormone binding"/>
    <property type="evidence" value="ECO:0000314"/>
    <property type="project" value="UniProtKB"/>
</dbReference>
<dbReference type="GO" id="GO:0003714">
    <property type="term" value="F:transcription corepressor activity"/>
    <property type="evidence" value="ECO:0000315"/>
    <property type="project" value="UniProtKB"/>
</dbReference>
<dbReference type="GO" id="GO:0006554">
    <property type="term" value="P:lysine catabolic process"/>
    <property type="evidence" value="ECO:0000304"/>
    <property type="project" value="Reactome"/>
</dbReference>
<dbReference type="GO" id="GO:0000122">
    <property type="term" value="P:negative regulation of transcription by RNA polymerase II"/>
    <property type="evidence" value="ECO:0000315"/>
    <property type="project" value="UniProtKB"/>
</dbReference>
<dbReference type="GO" id="GO:0007605">
    <property type="term" value="P:sensory perception of sound"/>
    <property type="evidence" value="ECO:0000315"/>
    <property type="project" value="UniProtKB"/>
</dbReference>
<dbReference type="GO" id="GO:0042403">
    <property type="term" value="P:thyroid hormone metabolic process"/>
    <property type="evidence" value="ECO:0000318"/>
    <property type="project" value="GO_Central"/>
</dbReference>
<dbReference type="GO" id="GO:0070327">
    <property type="term" value="P:thyroid hormone transport"/>
    <property type="evidence" value="ECO:0000315"/>
    <property type="project" value="UniProtKB"/>
</dbReference>
<dbReference type="FunFam" id="3.30.1780.10:FF:000001">
    <property type="entry name" value="Ketimine reductase mu-crystallin"/>
    <property type="match status" value="1"/>
</dbReference>
<dbReference type="FunFam" id="3.40.50.720:FF:000241">
    <property type="entry name" value="ketimine reductase mu-crystallin"/>
    <property type="match status" value="1"/>
</dbReference>
<dbReference type="Gene3D" id="3.40.50.720">
    <property type="entry name" value="NAD(P)-binding Rossmann-like Domain"/>
    <property type="match status" value="1"/>
</dbReference>
<dbReference type="Gene3D" id="3.30.1780.10">
    <property type="entry name" value="ornithine cyclodeaminase, domain 1"/>
    <property type="match status" value="1"/>
</dbReference>
<dbReference type="InterPro" id="IPR036291">
    <property type="entry name" value="NAD(P)-bd_dom_sf"/>
</dbReference>
<dbReference type="InterPro" id="IPR003462">
    <property type="entry name" value="ODC_Mu_crystall"/>
</dbReference>
<dbReference type="InterPro" id="IPR023401">
    <property type="entry name" value="ODC_N"/>
</dbReference>
<dbReference type="PANTHER" id="PTHR13812">
    <property type="entry name" value="KETIMINE REDUCTASE MU-CRYSTALLIN"/>
    <property type="match status" value="1"/>
</dbReference>
<dbReference type="PANTHER" id="PTHR13812:SF19">
    <property type="entry name" value="KETIMINE REDUCTASE MU-CRYSTALLIN"/>
    <property type="match status" value="1"/>
</dbReference>
<dbReference type="Pfam" id="PF02423">
    <property type="entry name" value="OCD_Mu_crystall"/>
    <property type="match status" value="1"/>
</dbReference>
<dbReference type="PIRSF" id="PIRSF001439">
    <property type="entry name" value="CryM"/>
    <property type="match status" value="1"/>
</dbReference>
<dbReference type="SUPFAM" id="SSF51735">
    <property type="entry name" value="NAD(P)-binding Rossmann-fold domains"/>
    <property type="match status" value="1"/>
</dbReference>
<comment type="function">
    <text evidence="2 7 8 10">Catalyzes the NAD(P)H-dependent reduction of imine double bonds of a number of cyclic ketimine substrates, including sulfur-containing cyclic ketimines (PubMed:21332720, PubMed:25931162). Under physiological conditions, it efficiently catalyzes delta(1)-piperideine-2-carboxylate (P2C) and delta(1)-pyrroline-2-carboxylate (Pyr2C) reduction, suggesting a central role in lysine and glutamate metabolism (PubMed:25931162). Additional substrates are delta(2)-thiazoline-2-carboxylate (T2C), 3,4-dehydrothiomorpholine-3-carboxylate (AECK), and (R)-lanthionine ketimine (LK) that is reduced at very low rate compared to other substrates (PubMed:25931162). Also catalyzes the NAD(P)H-dependent reduction of (S)-cystathionine ketimine (CysK) (By similarity).</text>
</comment>
<comment type="catalytic activity">
    <reaction evidence="8">
        <text>L-pipecolate + NADP(+) = Delta(1)-piperideine-2-carboxylate + NADPH + H(+)</text>
        <dbReference type="Rhea" id="RHEA:12524"/>
        <dbReference type="ChEBI" id="CHEBI:15378"/>
        <dbReference type="ChEBI" id="CHEBI:57783"/>
        <dbReference type="ChEBI" id="CHEBI:58349"/>
        <dbReference type="ChEBI" id="CHEBI:61185"/>
        <dbReference type="ChEBI" id="CHEBI:77631"/>
        <dbReference type="EC" id="1.5.1.1"/>
    </reaction>
    <physiologicalReaction direction="right-to-left" evidence="15">
        <dbReference type="Rhea" id="RHEA:12526"/>
    </physiologicalReaction>
</comment>
<comment type="catalytic activity">
    <reaction evidence="2">
        <text>L-pipecolate + NAD(+) = Delta(1)-piperideine-2-carboxylate + NADH + H(+)</text>
        <dbReference type="Rhea" id="RHEA:30807"/>
        <dbReference type="ChEBI" id="CHEBI:15378"/>
        <dbReference type="ChEBI" id="CHEBI:57540"/>
        <dbReference type="ChEBI" id="CHEBI:57945"/>
        <dbReference type="ChEBI" id="CHEBI:61185"/>
        <dbReference type="ChEBI" id="CHEBI:77631"/>
        <dbReference type="EC" id="1.5.1.1"/>
    </reaction>
    <physiologicalReaction direction="right-to-left" evidence="2">
        <dbReference type="Rhea" id="RHEA:30809"/>
    </physiologicalReaction>
</comment>
<comment type="catalytic activity">
    <reaction evidence="8">
        <text>L-proline + NADP(+) = 1-pyrroline-2-carboxylate + NADPH + H(+)</text>
        <dbReference type="Rhea" id="RHEA:20317"/>
        <dbReference type="ChEBI" id="CHEBI:15378"/>
        <dbReference type="ChEBI" id="CHEBI:39785"/>
        <dbReference type="ChEBI" id="CHEBI:57783"/>
        <dbReference type="ChEBI" id="CHEBI:58349"/>
        <dbReference type="ChEBI" id="CHEBI:60039"/>
        <dbReference type="EC" id="1.5.1.1"/>
    </reaction>
    <physiologicalReaction direction="right-to-left" evidence="15">
        <dbReference type="Rhea" id="RHEA:20319"/>
    </physiologicalReaction>
</comment>
<comment type="catalytic activity">
    <reaction evidence="13">
        <text>L-proline + NAD(+) = 1-pyrroline-2-carboxylate + NADH + H(+)</text>
        <dbReference type="Rhea" id="RHEA:20321"/>
        <dbReference type="ChEBI" id="CHEBI:15378"/>
        <dbReference type="ChEBI" id="CHEBI:39785"/>
        <dbReference type="ChEBI" id="CHEBI:57540"/>
        <dbReference type="ChEBI" id="CHEBI:57945"/>
        <dbReference type="ChEBI" id="CHEBI:60039"/>
        <dbReference type="EC" id="1.5.1.1"/>
    </reaction>
    <physiologicalReaction direction="right-to-left" evidence="13">
        <dbReference type="Rhea" id="RHEA:20323"/>
    </physiologicalReaction>
</comment>
<comment type="catalytic activity">
    <reaction evidence="7 8">
        <text>(3R)-1,4-thiomorpholine-3-carboxylate + NAD(+) = 3,4-dehydrothiomorpholine-3-carboxylate + NADH + 2 H(+)</text>
        <dbReference type="Rhea" id="RHEA:12504"/>
        <dbReference type="ChEBI" id="CHEBI:15378"/>
        <dbReference type="ChEBI" id="CHEBI:57540"/>
        <dbReference type="ChEBI" id="CHEBI:57945"/>
        <dbReference type="ChEBI" id="CHEBI:58517"/>
        <dbReference type="ChEBI" id="CHEBI:176873"/>
        <dbReference type="EC" id="1.5.1.25"/>
    </reaction>
    <physiologicalReaction direction="right-to-left" evidence="14 15">
        <dbReference type="Rhea" id="RHEA:12506"/>
    </physiologicalReaction>
</comment>
<comment type="catalytic activity">
    <reaction evidence="7 8">
        <text>(3R)-1,4-thiomorpholine-3-carboxylate + NADP(+) = 3,4-dehydrothiomorpholine-3-carboxylate + NADPH + 2 H(+)</text>
        <dbReference type="Rhea" id="RHEA:12500"/>
        <dbReference type="ChEBI" id="CHEBI:15378"/>
        <dbReference type="ChEBI" id="CHEBI:57783"/>
        <dbReference type="ChEBI" id="CHEBI:58349"/>
        <dbReference type="ChEBI" id="CHEBI:58517"/>
        <dbReference type="ChEBI" id="CHEBI:176873"/>
        <dbReference type="EC" id="1.5.1.25"/>
    </reaction>
    <physiologicalReaction direction="right-to-left" evidence="14 15">
        <dbReference type="Rhea" id="RHEA:12502"/>
    </physiologicalReaction>
</comment>
<comment type="catalytic activity">
    <reaction evidence="2">
        <text>(S)-cystathionine ketimine + NADH + 2 H(+) = (3R,5S)-2,3,5,6,7-pentahydro-1,4-thiazepine-3,5-dicarboxylate + NAD(+)</text>
        <dbReference type="Rhea" id="RHEA:68032"/>
        <dbReference type="ChEBI" id="CHEBI:15378"/>
        <dbReference type="ChEBI" id="CHEBI:57540"/>
        <dbReference type="ChEBI" id="CHEBI:57945"/>
        <dbReference type="ChEBI" id="CHEBI:176808"/>
        <dbReference type="ChEBI" id="CHEBI:176810"/>
    </reaction>
    <physiologicalReaction direction="left-to-right" evidence="2">
        <dbReference type="Rhea" id="RHEA:68033"/>
    </physiologicalReaction>
</comment>
<comment type="catalytic activity">
    <reaction evidence="2">
        <text>(S)-cystathionine ketimine + NADPH + 2 H(+) = (3R,5S)-2,3,5,6,7-pentahydro-1,4-thiazepine-3,5-dicarboxylate + NADP(+)</text>
        <dbReference type="Rhea" id="RHEA:68036"/>
        <dbReference type="ChEBI" id="CHEBI:15378"/>
        <dbReference type="ChEBI" id="CHEBI:57783"/>
        <dbReference type="ChEBI" id="CHEBI:58349"/>
        <dbReference type="ChEBI" id="CHEBI:176808"/>
        <dbReference type="ChEBI" id="CHEBI:176810"/>
    </reaction>
    <physiologicalReaction direction="left-to-right" evidence="2">
        <dbReference type="Rhea" id="RHEA:68037"/>
    </physiologicalReaction>
</comment>
<comment type="catalytic activity">
    <reaction evidence="8">
        <text>(R)-lanthionine ketimine + NADPH + 2 H(+) = (3R,5R)-1,4-thiomorpholine-3,5-dicarboxylate + NADP(+)</text>
        <dbReference type="Rhea" id="RHEA:68040"/>
        <dbReference type="ChEBI" id="CHEBI:15378"/>
        <dbReference type="ChEBI" id="CHEBI:57783"/>
        <dbReference type="ChEBI" id="CHEBI:58349"/>
        <dbReference type="ChEBI" id="CHEBI:176891"/>
        <dbReference type="ChEBI" id="CHEBI:176892"/>
    </reaction>
    <physiologicalReaction direction="left-to-right" evidence="15">
        <dbReference type="Rhea" id="RHEA:68041"/>
    </physiologicalReaction>
</comment>
<comment type="catalytic activity">
    <reaction evidence="8">
        <text>Delta(2)-thiazoline-2-carboxylate + NADPH + 2 H(+) = L-thiazolidine-2-carboxylate + NADP(+)</text>
        <dbReference type="Rhea" id="RHEA:68072"/>
        <dbReference type="ChEBI" id="CHEBI:15378"/>
        <dbReference type="ChEBI" id="CHEBI:57783"/>
        <dbReference type="ChEBI" id="CHEBI:58349"/>
        <dbReference type="ChEBI" id="CHEBI:176895"/>
        <dbReference type="ChEBI" id="CHEBI:176896"/>
    </reaction>
    <physiologicalReaction direction="left-to-right" evidence="15">
        <dbReference type="Rhea" id="RHEA:68073"/>
    </physiologicalReaction>
</comment>
<comment type="activity regulation">
    <text evidence="7 8">Inhibited by thyroid hormones triiodothyronine (T3) and thyroxine (T4).</text>
</comment>
<comment type="biophysicochemical properties">
    <kinetics>
        <KM evidence="7">47 uM for 3,4-dehydro-thiomorpholine-3-carboxylate (at pH 5.0 and 37 degrees Celsius)</KM>
        <KM evidence="8">28 uM for 3,4-dehydro-thiomorpholine-3-carboxylate (at pH 7.2 and 37 degrees Celsius)</KM>
        <KM evidence="7">3.6 uM for NADH (at pH 5.0 and 37 degrees Celsius)</KM>
        <KM evidence="8">13 uM for delta(1)-piperideine-2-carboxylate (at pH 7.2 and 37 degrees Celsius)</KM>
        <KM evidence="8">45 uM for 1-pyrroline-2-carboxylate (at pH 7.2 and 37 degrees Celsius)</KM>
        <KM evidence="8">21 uM for delta(2)-thiazoline-2-carboxylate (at pH 7.2 and 37 degrees Celsius)</KM>
        <Vmax evidence="7">9.6 umol/min/mg enzyme with 3,4-dehydro-thiomorpholine-3-carboxylate as substrate (at pH 5.0 and 37 degrees Celsius)</Vmax>
        <Vmax evidence="8">0.36 umol/min/mg enzyme toward 3,4-dehydro-thiomorpholine-3-carboxylate with NADPH as cosubstrate (at pH 7.2 and 37 degrees Celsius)</Vmax>
        <Vmax evidence="8">7.36 umol/min/mg enzyme toward delta(1)-piperideine-2-carboxylate with NADPH as cosubstrate (at pH 7.2 and 37 degrees Celsius)</Vmax>
        <Vmax evidence="8">11.1 umol/min/mg enzyme toward 1-pyrroline-2-carboxylate with NADPH as cosubstrate (at pH 7.2 and 37 degrees Celsius)</Vmax>
        <Vmax evidence="8">2.8 umol/min/mg enzyme toward delta(2)-thiazoline-2-carboxylate with NADPH as cosubstrate (at pH 7.2 and 37 degrees Celsius)</Vmax>
    </kinetics>
    <phDependence>
        <text evidence="7">Optimum pH is 4.5 for the reduction of 3,4-dehydro-thiomorpholine-3-carboxylate at 37 degrees Celsius with NADH as cosubstrate.</text>
    </phDependence>
</comment>
<comment type="subunit">
    <text evidence="6 7 10">Homodimer (PubMed:17242435). Binds the thyroid hormone triiodothyronine (T3); T3 binding inhibits enzymatic activity (PubMed:9328354, PubMed:21332720).</text>
</comment>
<comment type="interaction">
    <interactant intactId="EBI-7107048">
        <id>Q14894</id>
    </interactant>
    <interactant intactId="EBI-748974">
        <id>Q96CV9</id>
        <label>OPTN</label>
    </interactant>
    <organismsDiffer>false</organismsDiffer>
    <experiments>3</experiments>
</comment>
<comment type="interaction">
    <interactant intactId="EBI-7107048">
        <id>Q14894</id>
    </interactant>
    <interactant intactId="EBI-710997">
        <id>P54274</id>
        <label>TERF1</label>
    </interactant>
    <organismsDiffer>false</organismsDiffer>
    <experiments>2</experiments>
</comment>
<comment type="subcellular location">
    <subcellularLocation>
        <location evidence="3">Cytoplasm</location>
    </subcellularLocation>
</comment>
<comment type="tissue specificity">
    <text evidence="3 4">Expressed in neural tissues, muscle and kidney (PubMed:1384048). Expressed in the inner ear (PubMed:12471561).</text>
</comment>
<comment type="disease" evidence="3 9">
    <disease id="DI-04417">
        <name>Deafness, autosomal dominant, 40</name>
        <acronym>DFNA40</acronym>
        <description>A form of non-syndromic sensorineural hearing loss. Sensorineural deafness results from damage to the neural receptors of the inner ear, the nerve pathways to the brain, or the area of the brain that receives sound information.</description>
        <dbReference type="MIM" id="616357"/>
    </disease>
    <text>The disease is caused by variants affecting the gene represented in this entry.</text>
</comment>
<comment type="similarity">
    <text evidence="13">Belongs to the ornithine cyclodeaminase/mu-crystallin family.</text>
</comment>
<evidence type="ECO:0000250" key="1">
    <source>
        <dbReference type="UniProtKB" id="O54983"/>
    </source>
</evidence>
<evidence type="ECO:0000250" key="2">
    <source>
        <dbReference type="UniProtKB" id="Q2KHX6"/>
    </source>
</evidence>
<evidence type="ECO:0000269" key="3">
    <source>
    </source>
</evidence>
<evidence type="ECO:0000269" key="4">
    <source>
    </source>
</evidence>
<evidence type="ECO:0000269" key="5">
    <source>
    </source>
</evidence>
<evidence type="ECO:0000269" key="6">
    <source>
    </source>
</evidence>
<evidence type="ECO:0000269" key="7">
    <source>
    </source>
</evidence>
<evidence type="ECO:0000269" key="8">
    <source>
    </source>
</evidence>
<evidence type="ECO:0000269" key="9">
    <source>
    </source>
</evidence>
<evidence type="ECO:0000269" key="10">
    <source>
    </source>
</evidence>
<evidence type="ECO:0000303" key="11">
    <source>
    </source>
</evidence>
<evidence type="ECO:0000303" key="12">
    <source>
    </source>
</evidence>
<evidence type="ECO:0000305" key="13"/>
<evidence type="ECO:0000305" key="14">
    <source>
    </source>
</evidence>
<evidence type="ECO:0000305" key="15">
    <source>
    </source>
</evidence>
<evidence type="ECO:0000312" key="16">
    <source>
        <dbReference type="HGNC" id="HGNC:2418"/>
    </source>
</evidence>
<evidence type="ECO:0007744" key="17">
    <source>
        <dbReference type="PDB" id="2I99"/>
    </source>
</evidence>
<evidence type="ECO:0007829" key="18">
    <source>
        <dbReference type="PDB" id="2I99"/>
    </source>
</evidence>
<keyword id="KW-0002">3D-structure</keyword>
<keyword id="KW-0963">Cytoplasm</keyword>
<keyword id="KW-0209">Deafness</keyword>
<keyword id="KW-0903">Direct protein sequencing</keyword>
<keyword id="KW-0225">Disease variant</keyword>
<keyword id="KW-0520">NAD</keyword>
<keyword id="KW-0521">NADP</keyword>
<keyword id="KW-1010">Non-syndromic deafness</keyword>
<keyword id="KW-0560">Oxidoreductase</keyword>
<keyword id="KW-1267">Proteomics identification</keyword>
<keyword id="KW-1185">Reference proteome</keyword>
<sequence length="314" mass="33776">MSRVPAFLSAAEVEEHLRSSSLLIPPLETALANFSSGPEGGVMQPVRTVVPVTKHRGYLGVMPAYSAAEDALTTKLVTFYEDRGITSVVPSHQATVLLFEPSNGTLLAVMDGNVITAKRTAAVSAIATKFLKPPSSEVLCILGAGVQAYSHYEIFTEQFSFKEVRIWNRTKENAEKFADTVQGEVRVCSSVQEAVAGADVIITVTLATEPILFGEWVKPGAHINAVGASRPDWRELDDELMKEAVLYVDSQEAALKESGDVLLSGAEIFAELGEVIKGVKPAHCEKTTVFKSLGMAVEDTVAAKLIYDSWSSGK</sequence>
<feature type="chain" id="PRO_0000200678" description="Ketimine reductase mu-crystallin">
    <location>
        <begin position="1"/>
        <end position="314"/>
    </location>
</feature>
<feature type="binding site" evidence="1">
    <location>
        <position position="47"/>
    </location>
    <ligand>
        <name>3,3',5-triiodo-L-thyronine</name>
        <dbReference type="ChEBI" id="CHEBI:533015"/>
    </ligand>
</feature>
<feature type="binding site" evidence="6 17">
    <location>
        <position position="82"/>
    </location>
    <ligand>
        <name>NADPH</name>
        <dbReference type="ChEBI" id="CHEBI:57783"/>
    </ligand>
</feature>
<feature type="binding site" evidence="6 17">
    <location>
        <position position="92"/>
    </location>
    <ligand>
        <name>NADPH</name>
        <dbReference type="ChEBI" id="CHEBI:57783"/>
    </ligand>
</feature>
<feature type="binding site" evidence="6 17">
    <location>
        <position position="119"/>
    </location>
    <ligand>
        <name>NADPH</name>
        <dbReference type="ChEBI" id="CHEBI:57783"/>
    </ligand>
</feature>
<feature type="binding site" evidence="6 17">
    <location>
        <position position="144"/>
    </location>
    <ligand>
        <name>NADPH</name>
        <dbReference type="ChEBI" id="CHEBI:57783"/>
    </ligand>
</feature>
<feature type="binding site" evidence="6 17">
    <location>
        <position position="146"/>
    </location>
    <ligand>
        <name>NADPH</name>
        <dbReference type="ChEBI" id="CHEBI:57783"/>
    </ligand>
</feature>
<feature type="binding site" evidence="6 17">
    <location>
        <position position="147"/>
    </location>
    <ligand>
        <name>NADPH</name>
        <dbReference type="ChEBI" id="CHEBI:57783"/>
    </ligand>
</feature>
<feature type="binding site" evidence="6 17">
    <location>
        <position position="168"/>
    </location>
    <ligand>
        <name>NADPH</name>
        <dbReference type="ChEBI" id="CHEBI:57783"/>
    </ligand>
</feature>
<feature type="binding site" evidence="6 17">
    <location>
        <position position="169"/>
    </location>
    <ligand>
        <name>NADPH</name>
        <dbReference type="ChEBI" id="CHEBI:57783"/>
    </ligand>
</feature>
<feature type="binding site" evidence="6 17">
    <location>
        <position position="170"/>
    </location>
    <ligand>
        <name>NADPH</name>
        <dbReference type="ChEBI" id="CHEBI:57783"/>
    </ligand>
</feature>
<feature type="binding site" evidence="6 17">
    <location>
        <position position="173"/>
    </location>
    <ligand>
        <name>NADPH</name>
        <dbReference type="ChEBI" id="CHEBI:57783"/>
    </ligand>
</feature>
<feature type="binding site" evidence="6 17">
    <location>
        <position position="205"/>
    </location>
    <ligand>
        <name>NADPH</name>
        <dbReference type="ChEBI" id="CHEBI:57783"/>
    </ligand>
</feature>
<feature type="binding site" evidence="6 17">
    <location>
        <position position="206"/>
    </location>
    <ligand>
        <name>NADPH</name>
        <dbReference type="ChEBI" id="CHEBI:57783"/>
    </ligand>
</feature>
<feature type="binding site" evidence="6 17">
    <location>
        <position position="226"/>
    </location>
    <ligand>
        <name>NADPH</name>
        <dbReference type="ChEBI" id="CHEBI:57783"/>
    </ligand>
</feature>
<feature type="binding site" evidence="6 17">
    <location>
        <position position="228"/>
    </location>
    <ligand>
        <name>NADPH</name>
        <dbReference type="ChEBI" id="CHEBI:57783"/>
    </ligand>
</feature>
<feature type="binding site" evidence="1">
    <location>
        <position position="257"/>
    </location>
    <ligand>
        <name>3,3',5-triiodo-L-thyronine</name>
        <dbReference type="ChEBI" id="CHEBI:533015"/>
    </ligand>
</feature>
<feature type="binding site" evidence="6 17">
    <location>
        <position position="292"/>
    </location>
    <ligand>
        <name>NADPH</name>
        <dbReference type="ChEBI" id="CHEBI:57783"/>
    </ligand>
</feature>
<feature type="sequence variant" id="VAR_090439" description="In DFNA40; uncertain significance." evidence="9">
    <original>P</original>
    <variation>L</variation>
    <location>
        <position position="51"/>
    </location>
</feature>
<feature type="sequence variant" id="VAR_073780" description="In DFNA40." evidence="3">
    <original>K</original>
    <variation>KYNKGT</variation>
    <location>
        <position position="314"/>
    </location>
</feature>
<feature type="sequence variant" id="VAR_073781" description="In DFNA40; decreased T3 binding; dbSNP:rs104894512." evidence="3 5">
    <original>K</original>
    <variation>T</variation>
    <location>
        <position position="314"/>
    </location>
</feature>
<feature type="strand" evidence="18">
    <location>
        <begin position="6"/>
        <end position="8"/>
    </location>
</feature>
<feature type="helix" evidence="18">
    <location>
        <begin position="10"/>
        <end position="16"/>
    </location>
</feature>
<feature type="helix" evidence="18">
    <location>
        <begin position="20"/>
        <end position="23"/>
    </location>
</feature>
<feature type="helix" evidence="18">
    <location>
        <begin position="24"/>
        <end position="35"/>
    </location>
</feature>
<feature type="helix" evidence="18">
    <location>
        <begin position="37"/>
        <end position="40"/>
    </location>
</feature>
<feature type="strand" evidence="18">
    <location>
        <begin position="48"/>
        <end position="52"/>
    </location>
</feature>
<feature type="helix" evidence="18">
    <location>
        <begin position="53"/>
        <end position="55"/>
    </location>
</feature>
<feature type="strand" evidence="18">
    <location>
        <begin position="57"/>
        <end position="66"/>
    </location>
</feature>
<feature type="turn" evidence="18">
    <location>
        <begin position="67"/>
        <end position="70"/>
    </location>
</feature>
<feature type="strand" evidence="18">
    <location>
        <begin position="71"/>
        <end position="80"/>
    </location>
</feature>
<feature type="strand" evidence="18">
    <location>
        <begin position="84"/>
        <end position="87"/>
    </location>
</feature>
<feature type="strand" evidence="18">
    <location>
        <begin position="89"/>
        <end position="99"/>
    </location>
</feature>
<feature type="turn" evidence="18">
    <location>
        <begin position="101"/>
        <end position="103"/>
    </location>
</feature>
<feature type="strand" evidence="18">
    <location>
        <begin position="106"/>
        <end position="111"/>
    </location>
</feature>
<feature type="helix" evidence="18">
    <location>
        <begin position="113"/>
        <end position="131"/>
    </location>
</feature>
<feature type="strand" evidence="18">
    <location>
        <begin position="138"/>
        <end position="142"/>
    </location>
</feature>
<feature type="helix" evidence="18">
    <location>
        <begin position="146"/>
        <end position="158"/>
    </location>
</feature>
<feature type="strand" evidence="18">
    <location>
        <begin position="162"/>
        <end position="167"/>
    </location>
</feature>
<feature type="helix" evidence="18">
    <location>
        <begin position="171"/>
        <end position="180"/>
    </location>
</feature>
<feature type="strand" evidence="18">
    <location>
        <begin position="181"/>
        <end position="183"/>
    </location>
</feature>
<feature type="helix" evidence="18">
    <location>
        <begin position="191"/>
        <end position="195"/>
    </location>
</feature>
<feature type="strand" evidence="18">
    <location>
        <begin position="199"/>
        <end position="203"/>
    </location>
</feature>
<feature type="helix" evidence="18">
    <location>
        <begin position="214"/>
        <end position="216"/>
    </location>
</feature>
<feature type="strand" evidence="18">
    <location>
        <begin position="222"/>
        <end position="225"/>
    </location>
</feature>
<feature type="helix" evidence="18">
    <location>
        <begin position="238"/>
        <end position="243"/>
    </location>
</feature>
<feature type="strand" evidence="18">
    <location>
        <begin position="244"/>
        <end position="249"/>
    </location>
</feature>
<feature type="helix" evidence="18">
    <location>
        <begin position="251"/>
        <end position="257"/>
    </location>
</feature>
<feature type="helix" evidence="18">
    <location>
        <begin position="259"/>
        <end position="262"/>
    </location>
</feature>
<feature type="turn" evidence="18">
    <location>
        <begin position="263"/>
        <end position="265"/>
    </location>
</feature>
<feature type="helix" evidence="18">
    <location>
        <begin position="272"/>
        <end position="277"/>
    </location>
</feature>
<feature type="strand" evidence="18">
    <location>
        <begin position="288"/>
        <end position="291"/>
    </location>
</feature>
<feature type="helix" evidence="18">
    <location>
        <begin position="296"/>
        <end position="310"/>
    </location>
</feature>
<gene>
    <name evidence="16" type="primary">CRYM</name>
    <name evidence="12" type="synonym">THBP</name>
</gene>
<organism>
    <name type="scientific">Homo sapiens</name>
    <name type="common">Human</name>
    <dbReference type="NCBI Taxonomy" id="9606"/>
    <lineage>
        <taxon>Eukaryota</taxon>
        <taxon>Metazoa</taxon>
        <taxon>Chordata</taxon>
        <taxon>Craniata</taxon>
        <taxon>Vertebrata</taxon>
        <taxon>Euteleostomi</taxon>
        <taxon>Mammalia</taxon>
        <taxon>Eutheria</taxon>
        <taxon>Euarchontoglires</taxon>
        <taxon>Primates</taxon>
        <taxon>Haplorrhini</taxon>
        <taxon>Catarrhini</taxon>
        <taxon>Hominidae</taxon>
        <taxon>Homo</taxon>
    </lineage>
</organism>
<reference key="1">
    <citation type="journal article" date="1997" name="Mol. Vis.">
        <title>Two roles for mu-crystallin: a lens structural protein in diurnal marsupials and a possible enzyme in mammalian retinas.</title>
        <authorList>
            <person name="Segovia L."/>
            <person name="Horwitz J."/>
            <person name="Gasser R."/>
            <person name="Wistow G."/>
        </authorList>
    </citation>
    <scope>NUCLEOTIDE SEQUENCE [MRNA]</scope>
    <source>
        <tissue>Retina</tissue>
    </source>
</reference>
<reference key="2">
    <citation type="journal article" date="1997" name="Mol. Endocrinol.">
        <title>Purification, molecular cloning, and functional expression of the human nicotinamide-adenine dinucleotide phosphate-regulated thyroid hormone-binding protein.</title>
        <authorList>
            <person name="Vie M.-P."/>
            <person name="Evrard C."/>
            <person name="Osty J."/>
            <person name="Breton-Gilet A."/>
            <person name="Blanchet P."/>
            <person name="Pomerance M."/>
            <person name="Rouget P."/>
            <person name="Francon J."/>
            <person name="Blondeau J.-P."/>
        </authorList>
    </citation>
    <scope>NUCLEOTIDE SEQUENCE [MRNA]</scope>
    <scope>INTERACTION WITH T3</scope>
    <source>
        <tissue>Brain</tissue>
    </source>
</reference>
<reference key="3">
    <citation type="submission" date="1997-12" db="EMBL/GenBank/DDBJ databases">
        <title>Human and mouse Mu-crystallin.</title>
        <authorList>
            <person name="Sperbeck S.J."/>
            <person name="Segovia L."/>
            <person name="Wistow G.J."/>
        </authorList>
    </citation>
    <scope>NUCLEOTIDE SEQUENCE [GENOMIC DNA]</scope>
</reference>
<reference key="4">
    <citation type="journal article" date="1999" name="Genomics">
        <title>Genome duplications and other features in 12 Mb of DNA sequence from human chromosome 16p and 16q.</title>
        <authorList>
            <person name="Loftus B.J."/>
            <person name="Kim U.-J."/>
            <person name="Sneddon V.P."/>
            <person name="Kalush F."/>
            <person name="Brandon R."/>
            <person name="Fuhrmann J."/>
            <person name="Mason T."/>
            <person name="Crosby M.L."/>
            <person name="Barnstead M."/>
            <person name="Cronin L."/>
            <person name="Mays A.D."/>
            <person name="Cao Y."/>
            <person name="Xu R.X."/>
            <person name="Kang H.-L."/>
            <person name="Mitchell S."/>
            <person name="Eichler E.E."/>
            <person name="Harris P.C."/>
            <person name="Venter J.C."/>
            <person name="Adams M.D."/>
        </authorList>
    </citation>
    <scope>NUCLEOTIDE SEQUENCE [LARGE SCALE GENOMIC DNA]</scope>
</reference>
<reference key="5">
    <citation type="journal article" date="2004" name="Nat. Genet.">
        <title>Complete sequencing and characterization of 21,243 full-length human cDNAs.</title>
        <authorList>
            <person name="Ota T."/>
            <person name="Suzuki Y."/>
            <person name="Nishikawa T."/>
            <person name="Otsuki T."/>
            <person name="Sugiyama T."/>
            <person name="Irie R."/>
            <person name="Wakamatsu A."/>
            <person name="Hayashi K."/>
            <person name="Sato H."/>
            <person name="Nagai K."/>
            <person name="Kimura K."/>
            <person name="Makita H."/>
            <person name="Sekine M."/>
            <person name="Obayashi M."/>
            <person name="Nishi T."/>
            <person name="Shibahara T."/>
            <person name="Tanaka T."/>
            <person name="Ishii S."/>
            <person name="Yamamoto J."/>
            <person name="Saito K."/>
            <person name="Kawai Y."/>
            <person name="Isono Y."/>
            <person name="Nakamura Y."/>
            <person name="Nagahari K."/>
            <person name="Murakami K."/>
            <person name="Yasuda T."/>
            <person name="Iwayanagi T."/>
            <person name="Wagatsuma M."/>
            <person name="Shiratori A."/>
            <person name="Sudo H."/>
            <person name="Hosoiri T."/>
            <person name="Kaku Y."/>
            <person name="Kodaira H."/>
            <person name="Kondo H."/>
            <person name="Sugawara M."/>
            <person name="Takahashi M."/>
            <person name="Kanda K."/>
            <person name="Yokoi T."/>
            <person name="Furuya T."/>
            <person name="Kikkawa E."/>
            <person name="Omura Y."/>
            <person name="Abe K."/>
            <person name="Kamihara K."/>
            <person name="Katsuta N."/>
            <person name="Sato K."/>
            <person name="Tanikawa M."/>
            <person name="Yamazaki M."/>
            <person name="Ninomiya K."/>
            <person name="Ishibashi T."/>
            <person name="Yamashita H."/>
            <person name="Murakawa K."/>
            <person name="Fujimori K."/>
            <person name="Tanai H."/>
            <person name="Kimata M."/>
            <person name="Watanabe M."/>
            <person name="Hiraoka S."/>
            <person name="Chiba Y."/>
            <person name="Ishida S."/>
            <person name="Ono Y."/>
            <person name="Takiguchi S."/>
            <person name="Watanabe S."/>
            <person name="Yosida M."/>
            <person name="Hotuta T."/>
            <person name="Kusano J."/>
            <person name="Kanehori K."/>
            <person name="Takahashi-Fujii A."/>
            <person name="Hara H."/>
            <person name="Tanase T.-O."/>
            <person name="Nomura Y."/>
            <person name="Togiya S."/>
            <person name="Komai F."/>
            <person name="Hara R."/>
            <person name="Takeuchi K."/>
            <person name="Arita M."/>
            <person name="Imose N."/>
            <person name="Musashino K."/>
            <person name="Yuuki H."/>
            <person name="Oshima A."/>
            <person name="Sasaki N."/>
            <person name="Aotsuka S."/>
            <person name="Yoshikawa Y."/>
            <person name="Matsunawa H."/>
            <person name="Ichihara T."/>
            <person name="Shiohata N."/>
            <person name="Sano S."/>
            <person name="Moriya S."/>
            <person name="Momiyama H."/>
            <person name="Satoh N."/>
            <person name="Takami S."/>
            <person name="Terashima Y."/>
            <person name="Suzuki O."/>
            <person name="Nakagawa S."/>
            <person name="Senoh A."/>
            <person name="Mizoguchi H."/>
            <person name="Goto Y."/>
            <person name="Shimizu F."/>
            <person name="Wakebe H."/>
            <person name="Hishigaki H."/>
            <person name="Watanabe T."/>
            <person name="Sugiyama A."/>
            <person name="Takemoto M."/>
            <person name="Kawakami B."/>
            <person name="Yamazaki M."/>
            <person name="Watanabe K."/>
            <person name="Kumagai A."/>
            <person name="Itakura S."/>
            <person name="Fukuzumi Y."/>
            <person name="Fujimori Y."/>
            <person name="Komiyama M."/>
            <person name="Tashiro H."/>
            <person name="Tanigami A."/>
            <person name="Fujiwara T."/>
            <person name="Ono T."/>
            <person name="Yamada K."/>
            <person name="Fujii Y."/>
            <person name="Ozaki K."/>
            <person name="Hirao M."/>
            <person name="Ohmori Y."/>
            <person name="Kawabata A."/>
            <person name="Hikiji T."/>
            <person name="Kobatake N."/>
            <person name="Inagaki H."/>
            <person name="Ikema Y."/>
            <person name="Okamoto S."/>
            <person name="Okitani R."/>
            <person name="Kawakami T."/>
            <person name="Noguchi S."/>
            <person name="Itoh T."/>
            <person name="Shigeta K."/>
            <person name="Senba T."/>
            <person name="Matsumura K."/>
            <person name="Nakajima Y."/>
            <person name="Mizuno T."/>
            <person name="Morinaga M."/>
            <person name="Sasaki M."/>
            <person name="Togashi T."/>
            <person name="Oyama M."/>
            <person name="Hata H."/>
            <person name="Watanabe M."/>
            <person name="Komatsu T."/>
            <person name="Mizushima-Sugano J."/>
            <person name="Satoh T."/>
            <person name="Shirai Y."/>
            <person name="Takahashi Y."/>
            <person name="Nakagawa K."/>
            <person name="Okumura K."/>
            <person name="Nagase T."/>
            <person name="Nomura N."/>
            <person name="Kikuchi H."/>
            <person name="Masuho Y."/>
            <person name="Yamashita R."/>
            <person name="Nakai K."/>
            <person name="Yada T."/>
            <person name="Nakamura Y."/>
            <person name="Ohara O."/>
            <person name="Isogai T."/>
            <person name="Sugano S."/>
        </authorList>
    </citation>
    <scope>NUCLEOTIDE SEQUENCE [LARGE SCALE MRNA]</scope>
</reference>
<reference key="6">
    <citation type="journal article" date="2007" name="BMC Genomics">
        <title>The full-ORF clone resource of the German cDNA consortium.</title>
        <authorList>
            <person name="Bechtel S."/>
            <person name="Rosenfelder H."/>
            <person name="Duda A."/>
            <person name="Schmidt C.P."/>
            <person name="Ernst U."/>
            <person name="Wellenreuther R."/>
            <person name="Mehrle A."/>
            <person name="Schuster C."/>
            <person name="Bahr A."/>
            <person name="Bloecker H."/>
            <person name="Heubner D."/>
            <person name="Hoerlein A."/>
            <person name="Michel G."/>
            <person name="Wedler H."/>
            <person name="Koehrer K."/>
            <person name="Ottenwaelder B."/>
            <person name="Poustka A."/>
            <person name="Wiemann S."/>
            <person name="Schupp I."/>
        </authorList>
    </citation>
    <scope>NUCLEOTIDE SEQUENCE [LARGE SCALE MRNA]</scope>
    <source>
        <tissue>Uterine endothelium</tissue>
    </source>
</reference>
<reference key="7">
    <citation type="journal article" date="2004" name="Nature">
        <title>The sequence and analysis of duplication-rich human chromosome 16.</title>
        <authorList>
            <person name="Martin J."/>
            <person name="Han C."/>
            <person name="Gordon L.A."/>
            <person name="Terry A."/>
            <person name="Prabhakar S."/>
            <person name="She X."/>
            <person name="Xie G."/>
            <person name="Hellsten U."/>
            <person name="Chan Y.M."/>
            <person name="Altherr M."/>
            <person name="Couronne O."/>
            <person name="Aerts A."/>
            <person name="Bajorek E."/>
            <person name="Black S."/>
            <person name="Blumer H."/>
            <person name="Branscomb E."/>
            <person name="Brown N.C."/>
            <person name="Bruno W.J."/>
            <person name="Buckingham J.M."/>
            <person name="Callen D.F."/>
            <person name="Campbell C.S."/>
            <person name="Campbell M.L."/>
            <person name="Campbell E.W."/>
            <person name="Caoile C."/>
            <person name="Challacombe J.F."/>
            <person name="Chasteen L.A."/>
            <person name="Chertkov O."/>
            <person name="Chi H.C."/>
            <person name="Christensen M."/>
            <person name="Clark L.M."/>
            <person name="Cohn J.D."/>
            <person name="Denys M."/>
            <person name="Detter J.C."/>
            <person name="Dickson M."/>
            <person name="Dimitrijevic-Bussod M."/>
            <person name="Escobar J."/>
            <person name="Fawcett J.J."/>
            <person name="Flowers D."/>
            <person name="Fotopulos D."/>
            <person name="Glavina T."/>
            <person name="Gomez M."/>
            <person name="Gonzales E."/>
            <person name="Goodstein D."/>
            <person name="Goodwin L.A."/>
            <person name="Grady D.L."/>
            <person name="Grigoriev I."/>
            <person name="Groza M."/>
            <person name="Hammon N."/>
            <person name="Hawkins T."/>
            <person name="Haydu L."/>
            <person name="Hildebrand C.E."/>
            <person name="Huang W."/>
            <person name="Israni S."/>
            <person name="Jett J."/>
            <person name="Jewett P.B."/>
            <person name="Kadner K."/>
            <person name="Kimball H."/>
            <person name="Kobayashi A."/>
            <person name="Krawczyk M.-C."/>
            <person name="Leyba T."/>
            <person name="Longmire J.L."/>
            <person name="Lopez F."/>
            <person name="Lou Y."/>
            <person name="Lowry S."/>
            <person name="Ludeman T."/>
            <person name="Manohar C.F."/>
            <person name="Mark G.A."/>
            <person name="McMurray K.L."/>
            <person name="Meincke L.J."/>
            <person name="Morgan J."/>
            <person name="Moyzis R.K."/>
            <person name="Mundt M.O."/>
            <person name="Munk A.C."/>
            <person name="Nandkeshwar R.D."/>
            <person name="Pitluck S."/>
            <person name="Pollard M."/>
            <person name="Predki P."/>
            <person name="Parson-Quintana B."/>
            <person name="Ramirez L."/>
            <person name="Rash S."/>
            <person name="Retterer J."/>
            <person name="Ricke D.O."/>
            <person name="Robinson D.L."/>
            <person name="Rodriguez A."/>
            <person name="Salamov A."/>
            <person name="Saunders E.H."/>
            <person name="Scott D."/>
            <person name="Shough T."/>
            <person name="Stallings R.L."/>
            <person name="Stalvey M."/>
            <person name="Sutherland R.D."/>
            <person name="Tapia R."/>
            <person name="Tesmer J.G."/>
            <person name="Thayer N."/>
            <person name="Thompson L.S."/>
            <person name="Tice H."/>
            <person name="Torney D.C."/>
            <person name="Tran-Gyamfi M."/>
            <person name="Tsai M."/>
            <person name="Ulanovsky L.E."/>
            <person name="Ustaszewska A."/>
            <person name="Vo N."/>
            <person name="White P.S."/>
            <person name="Williams A.L."/>
            <person name="Wills P.L."/>
            <person name="Wu J.-R."/>
            <person name="Wu K."/>
            <person name="Yang J."/>
            <person name="DeJong P."/>
            <person name="Bruce D."/>
            <person name="Doggett N.A."/>
            <person name="Deaven L."/>
            <person name="Schmutz J."/>
            <person name="Grimwood J."/>
            <person name="Richardson P."/>
            <person name="Rokhsar D.S."/>
            <person name="Eichler E.E."/>
            <person name="Gilna P."/>
            <person name="Lucas S.M."/>
            <person name="Myers R.M."/>
            <person name="Rubin E.M."/>
            <person name="Pennacchio L.A."/>
        </authorList>
    </citation>
    <scope>NUCLEOTIDE SEQUENCE [LARGE SCALE GENOMIC DNA]</scope>
</reference>
<reference key="8">
    <citation type="submission" date="2005-07" db="EMBL/GenBank/DDBJ databases">
        <authorList>
            <person name="Mural R.J."/>
            <person name="Istrail S."/>
            <person name="Sutton G."/>
            <person name="Florea L."/>
            <person name="Halpern A.L."/>
            <person name="Mobarry C.M."/>
            <person name="Lippert R."/>
            <person name="Walenz B."/>
            <person name="Shatkay H."/>
            <person name="Dew I."/>
            <person name="Miller J.R."/>
            <person name="Flanigan M.J."/>
            <person name="Edwards N.J."/>
            <person name="Bolanos R."/>
            <person name="Fasulo D."/>
            <person name="Halldorsson B.V."/>
            <person name="Hannenhalli S."/>
            <person name="Turner R."/>
            <person name="Yooseph S."/>
            <person name="Lu F."/>
            <person name="Nusskern D.R."/>
            <person name="Shue B.C."/>
            <person name="Zheng X.H."/>
            <person name="Zhong F."/>
            <person name="Delcher A.L."/>
            <person name="Huson D.H."/>
            <person name="Kravitz S.A."/>
            <person name="Mouchard L."/>
            <person name="Reinert K."/>
            <person name="Remington K.A."/>
            <person name="Clark A.G."/>
            <person name="Waterman M.S."/>
            <person name="Eichler E.E."/>
            <person name="Adams M.D."/>
            <person name="Hunkapiller M.W."/>
            <person name="Myers E.W."/>
            <person name="Venter J.C."/>
        </authorList>
    </citation>
    <scope>NUCLEOTIDE SEQUENCE [LARGE SCALE GENOMIC DNA]</scope>
</reference>
<reference key="9">
    <citation type="journal article" date="2004" name="Genome Res.">
        <title>The status, quality, and expansion of the NIH full-length cDNA project: the Mammalian Gene Collection (MGC).</title>
        <authorList>
            <consortium name="The MGC Project Team"/>
        </authorList>
    </citation>
    <scope>NUCLEOTIDE SEQUENCE [LARGE SCALE MRNA]</scope>
    <source>
        <tissue>Brain</tissue>
    </source>
</reference>
<reference key="10">
    <citation type="submission" date="2008-12" db="UniProtKB">
        <authorList>
            <person name="Lubec G."/>
            <person name="Afjehi-Sadat L."/>
            <person name="Chen W.-Q."/>
            <person name="Sun Y."/>
        </authorList>
    </citation>
    <scope>PROTEIN SEQUENCE OF 4-18; 57-83; 177-186; 243-277 AND 292-314</scope>
    <scope>IDENTIFICATION BY MASS SPECTROMETRY</scope>
    <source>
        <tissue>Brain</tissue>
        <tissue>Cajal-Retzius cell</tissue>
        <tissue>Fetal brain cortex</tissue>
    </source>
</reference>
<reference key="11">
    <citation type="journal article" date="1992" name="Proc. Natl. Acad. Sci. U.S.A.">
        <title>Mu-crystallin is a mammalian homologue of Agrobacterium ornithine cyclodeaminase and is expressed in human retina.</title>
        <authorList>
            <person name="Kim R.Y."/>
            <person name="Gasser R."/>
            <person name="Wistow G.J."/>
        </authorList>
    </citation>
    <scope>NUCLEOTIDE SEQUENCE OF 37-314</scope>
    <scope>TISSUE SPECIFICITY</scope>
    <source>
        <tissue>Retina</tissue>
    </source>
</reference>
<reference key="12">
    <citation type="journal article" date="2011" name="J. Neurochem.">
        <title>Mammalian forebrain ketimine reductase identified as mu-crystallin; potential regulation by thyroid hormones.</title>
        <authorList>
            <person name="Hallen A."/>
            <person name="Cooper A.J."/>
            <person name="Jamie J.F."/>
            <person name="Haynes P.A."/>
            <person name="Willows R.D."/>
        </authorList>
    </citation>
    <scope>FUNCTION</scope>
    <scope>CATALYTIC ACTIVITY</scope>
    <scope>BIOPHYSICOCHEMICAL PROPERTIES</scope>
    <scope>ACTIVITY REGULATION</scope>
</reference>
<reference key="13">
    <citation type="journal article" date="2014" name="J. Proteomics">
        <title>An enzyme assisted RP-RPLC approach for in-depth analysis of human liver phosphoproteome.</title>
        <authorList>
            <person name="Bian Y."/>
            <person name="Song C."/>
            <person name="Cheng K."/>
            <person name="Dong M."/>
            <person name="Wang F."/>
            <person name="Huang J."/>
            <person name="Sun D."/>
            <person name="Wang L."/>
            <person name="Ye M."/>
            <person name="Zou H."/>
        </authorList>
    </citation>
    <scope>IDENTIFICATION BY MASS SPECTROMETRY [LARGE SCALE ANALYSIS]</scope>
    <source>
        <tissue>Liver</tissue>
    </source>
</reference>
<reference key="14">
    <citation type="journal article" date="2015" name="Neurochem. Res.">
        <title>Insights into enzyme catalysis and thyroid hormone regulation of cerebral ketimine reductase/mu-crystallin under physiological conditions.</title>
        <authorList>
            <person name="Hallen A."/>
            <person name="Cooper A.J."/>
            <person name="Jamie J.F."/>
            <person name="Karuso P."/>
        </authorList>
    </citation>
    <scope>FUNCTION</scope>
    <scope>CATALYTIC ACTIVITY</scope>
    <scope>BIOPHYSICOCHEMICAL PROPERTIES</scope>
    <scope>ACTIVITY REGULATION</scope>
</reference>
<reference key="15">
    <citation type="journal article" date="2007" name="Protein Sci.">
        <title>Crystal structure of human micro-crystallin complexed with NADPH.</title>
        <authorList>
            <person name="Cheng Z."/>
            <person name="Sun L."/>
            <person name="He J."/>
            <person name="Gong W."/>
        </authorList>
    </citation>
    <scope>X-RAY CRYSTALLOGRAPHY (2.6 ANGSTROMS) OF 2-313 IN COMPLEX WITH NADPH</scope>
    <scope>SUBUNIT</scope>
</reference>
<reference key="16">
    <citation type="journal article" date="2003" name="Am. J. Hum. Genet.">
        <title>Identification of CRYM as a candidate responsible for nonsyndromic deafness, through cDNA microarray analysis of human cochlear and vestibular tissues.</title>
        <authorList>
            <person name="Abe S."/>
            <person name="Katagiri T."/>
            <person name="Saito-Hisaminato A."/>
            <person name="Usami S."/>
            <person name="Inoue Y."/>
            <person name="Tsunoda T."/>
            <person name="Nakamura Y."/>
        </authorList>
    </citation>
    <scope>VARIANTS DFNA40 THR-314 AND TYR-ASN-LYS-GLY-THR-314 EXT</scope>
    <scope>INVOLVEMENT IN DFNA40</scope>
    <scope>TISSUE SPECIFICITY</scope>
    <scope>SUBCELLULAR LOCATION</scope>
</reference>
<reference key="17">
    <citation type="journal article" date="2006" name="J. Med. Genet.">
        <title>CRYM mutations cause deafness through thyroid hormone binding properties in the fibrocytes of the cochlea.</title>
        <authorList>
            <person name="Oshima A."/>
            <person name="Suzuki S."/>
            <person name="Takumi Y."/>
            <person name="Hashizume K."/>
            <person name="Abe S."/>
            <person name="Usami S."/>
        </authorList>
    </citation>
    <scope>CHARACTERIZATION OF VARIANT THR-314</scope>
</reference>
<reference key="18">
    <citation type="journal article" date="2020" name="Exp. Ther. Med.">
        <title>Identification of a novel mutation in CRYM in a Chinese family with hearing loss using whole-exome sequencing.</title>
        <authorList>
            <person name="Wang M."/>
            <person name="Li Q."/>
            <person name="Deng A."/>
            <person name="Zhu X."/>
            <person name="Yang J."/>
        </authorList>
    </citation>
    <scope>VARIANT DFNA40 LEU-51</scope>
</reference>
<proteinExistence type="evidence at protein level"/>